<proteinExistence type="inferred from homology"/>
<accession>Q31IC2</accession>
<evidence type="ECO:0000255" key="1">
    <source>
        <dbReference type="HAMAP-Rule" id="MF_01603"/>
    </source>
</evidence>
<feature type="chain" id="PRO_0000255786" description="Bifunctional protein HldE">
    <location>
        <begin position="1"/>
        <end position="480"/>
    </location>
</feature>
<feature type="region of interest" description="Ribokinase">
    <location>
        <begin position="1"/>
        <end position="316"/>
    </location>
</feature>
<feature type="region of interest" description="Cytidylyltransferase">
    <location>
        <begin position="342"/>
        <end position="480"/>
    </location>
</feature>
<feature type="active site" evidence="1">
    <location>
        <position position="261"/>
    </location>
</feature>
<feature type="binding site" evidence="1">
    <location>
        <begin position="192"/>
        <end position="195"/>
    </location>
    <ligand>
        <name>ATP</name>
        <dbReference type="ChEBI" id="CHEBI:30616"/>
    </ligand>
</feature>
<reference key="1">
    <citation type="journal article" date="2006" name="PLoS Biol.">
        <title>The genome of deep-sea vent chemolithoautotroph Thiomicrospira crunogena XCL-2.</title>
        <authorList>
            <person name="Scott K.M."/>
            <person name="Sievert S.M."/>
            <person name="Abril F.N."/>
            <person name="Ball L.A."/>
            <person name="Barrett C.J."/>
            <person name="Blake R.A."/>
            <person name="Boller A.J."/>
            <person name="Chain P.S.G."/>
            <person name="Clark J.A."/>
            <person name="Davis C.R."/>
            <person name="Detter C."/>
            <person name="Do K.F."/>
            <person name="Dobrinski K.P."/>
            <person name="Faza B.I."/>
            <person name="Fitzpatrick K.A."/>
            <person name="Freyermuth S.K."/>
            <person name="Harmer T.L."/>
            <person name="Hauser L.J."/>
            <person name="Huegler M."/>
            <person name="Kerfeld C.A."/>
            <person name="Klotz M.G."/>
            <person name="Kong W.W."/>
            <person name="Land M."/>
            <person name="Lapidus A."/>
            <person name="Larimer F.W."/>
            <person name="Longo D.L."/>
            <person name="Lucas S."/>
            <person name="Malfatti S.A."/>
            <person name="Massey S.E."/>
            <person name="Martin D.D."/>
            <person name="McCuddin Z."/>
            <person name="Meyer F."/>
            <person name="Moore J.L."/>
            <person name="Ocampo L.H. Jr."/>
            <person name="Paul J.H."/>
            <person name="Paulsen I.T."/>
            <person name="Reep D.K."/>
            <person name="Ren Q."/>
            <person name="Ross R.L."/>
            <person name="Sato P.Y."/>
            <person name="Thomas P."/>
            <person name="Tinkham L.E."/>
            <person name="Zeruth G.T."/>
        </authorList>
    </citation>
    <scope>NUCLEOTIDE SEQUENCE [LARGE SCALE GENOMIC DNA]</scope>
    <source>
        <strain>DSM 25203 / XCL-2</strain>
    </source>
</reference>
<comment type="function">
    <text evidence="1">Catalyzes the phosphorylation of D-glycero-D-manno-heptose 7-phosphate at the C-1 position to selectively form D-glycero-beta-D-manno-heptose-1,7-bisphosphate.</text>
</comment>
<comment type="function">
    <text evidence="1">Catalyzes the ADP transfer from ATP to D-glycero-beta-D-manno-heptose 1-phosphate, yielding ADP-D-glycero-beta-D-manno-heptose.</text>
</comment>
<comment type="catalytic activity">
    <reaction evidence="1">
        <text>D-glycero-beta-D-manno-heptose 7-phosphate + ATP = D-glycero-beta-D-manno-heptose 1,7-bisphosphate + ADP + H(+)</text>
        <dbReference type="Rhea" id="RHEA:27473"/>
        <dbReference type="ChEBI" id="CHEBI:15378"/>
        <dbReference type="ChEBI" id="CHEBI:30616"/>
        <dbReference type="ChEBI" id="CHEBI:60204"/>
        <dbReference type="ChEBI" id="CHEBI:60208"/>
        <dbReference type="ChEBI" id="CHEBI:456216"/>
        <dbReference type="EC" id="2.7.1.167"/>
    </reaction>
</comment>
<comment type="catalytic activity">
    <reaction evidence="1">
        <text>D-glycero-beta-D-manno-heptose 1-phosphate + ATP + H(+) = ADP-D-glycero-beta-D-manno-heptose + diphosphate</text>
        <dbReference type="Rhea" id="RHEA:27465"/>
        <dbReference type="ChEBI" id="CHEBI:15378"/>
        <dbReference type="ChEBI" id="CHEBI:30616"/>
        <dbReference type="ChEBI" id="CHEBI:33019"/>
        <dbReference type="ChEBI" id="CHEBI:59967"/>
        <dbReference type="ChEBI" id="CHEBI:61593"/>
        <dbReference type="EC" id="2.7.7.70"/>
    </reaction>
</comment>
<comment type="pathway">
    <text evidence="1">Nucleotide-sugar biosynthesis; ADP-L-glycero-beta-D-manno-heptose biosynthesis; ADP-L-glycero-beta-D-manno-heptose from D-glycero-beta-D-manno-heptose 7-phosphate: step 1/4.</text>
</comment>
<comment type="pathway">
    <text evidence="1">Nucleotide-sugar biosynthesis; ADP-L-glycero-beta-D-manno-heptose biosynthesis; ADP-L-glycero-beta-D-manno-heptose from D-glycero-beta-D-manno-heptose 7-phosphate: step 3/4.</text>
</comment>
<comment type="subunit">
    <text evidence="1">Homodimer.</text>
</comment>
<comment type="similarity">
    <text evidence="1">In the N-terminal section; belongs to the carbohydrate kinase PfkB family.</text>
</comment>
<comment type="similarity">
    <text evidence="1">In the C-terminal section; belongs to the cytidylyltransferase family.</text>
</comment>
<gene>
    <name evidence="1" type="primary">hldE</name>
    <name type="ordered locus">Tcr_0505</name>
</gene>
<keyword id="KW-0067">ATP-binding</keyword>
<keyword id="KW-0119">Carbohydrate metabolism</keyword>
<keyword id="KW-0418">Kinase</keyword>
<keyword id="KW-0511">Multifunctional enzyme</keyword>
<keyword id="KW-0547">Nucleotide-binding</keyword>
<keyword id="KW-0548">Nucleotidyltransferase</keyword>
<keyword id="KW-0808">Transferase</keyword>
<dbReference type="EC" id="2.7.1.167" evidence="1"/>
<dbReference type="EC" id="2.7.7.70" evidence="1"/>
<dbReference type="EMBL" id="CP000109">
    <property type="protein sequence ID" value="ABB41101.1"/>
    <property type="molecule type" value="Genomic_DNA"/>
</dbReference>
<dbReference type="SMR" id="Q31IC2"/>
<dbReference type="STRING" id="317025.Tcr_0505"/>
<dbReference type="KEGG" id="tcx:Tcr_0505"/>
<dbReference type="eggNOG" id="COG0615">
    <property type="taxonomic scope" value="Bacteria"/>
</dbReference>
<dbReference type="eggNOG" id="COG2870">
    <property type="taxonomic scope" value="Bacteria"/>
</dbReference>
<dbReference type="HOGENOM" id="CLU_021150_2_1_6"/>
<dbReference type="OrthoDB" id="9802794at2"/>
<dbReference type="UniPathway" id="UPA00356">
    <property type="reaction ID" value="UER00437"/>
</dbReference>
<dbReference type="UniPathway" id="UPA00356">
    <property type="reaction ID" value="UER00439"/>
</dbReference>
<dbReference type="GO" id="GO:0005829">
    <property type="term" value="C:cytosol"/>
    <property type="evidence" value="ECO:0007669"/>
    <property type="project" value="TreeGrafter"/>
</dbReference>
<dbReference type="GO" id="GO:0005524">
    <property type="term" value="F:ATP binding"/>
    <property type="evidence" value="ECO:0007669"/>
    <property type="project" value="UniProtKB-UniRule"/>
</dbReference>
<dbReference type="GO" id="GO:0033785">
    <property type="term" value="F:heptose 7-phosphate kinase activity"/>
    <property type="evidence" value="ECO:0007669"/>
    <property type="project" value="UniProtKB-UniRule"/>
</dbReference>
<dbReference type="GO" id="GO:0033786">
    <property type="term" value="F:heptose-1-phosphate adenylyltransferase activity"/>
    <property type="evidence" value="ECO:0007669"/>
    <property type="project" value="UniProtKB-UniRule"/>
</dbReference>
<dbReference type="GO" id="GO:0016773">
    <property type="term" value="F:phosphotransferase activity, alcohol group as acceptor"/>
    <property type="evidence" value="ECO:0007669"/>
    <property type="project" value="InterPro"/>
</dbReference>
<dbReference type="GO" id="GO:0097171">
    <property type="term" value="P:ADP-L-glycero-beta-D-manno-heptose biosynthetic process"/>
    <property type="evidence" value="ECO:0007669"/>
    <property type="project" value="UniProtKB-UniPathway"/>
</dbReference>
<dbReference type="CDD" id="cd01172">
    <property type="entry name" value="RfaE_like"/>
    <property type="match status" value="1"/>
</dbReference>
<dbReference type="FunFam" id="3.40.1190.20:FF:000002">
    <property type="entry name" value="Bifunctional protein HldE"/>
    <property type="match status" value="1"/>
</dbReference>
<dbReference type="FunFam" id="3.40.50.620:FF:000028">
    <property type="entry name" value="Bifunctional protein HldE"/>
    <property type="match status" value="1"/>
</dbReference>
<dbReference type="Gene3D" id="3.40.1190.20">
    <property type="match status" value="1"/>
</dbReference>
<dbReference type="Gene3D" id="3.40.50.620">
    <property type="entry name" value="HUPs"/>
    <property type="match status" value="1"/>
</dbReference>
<dbReference type="HAMAP" id="MF_01603">
    <property type="entry name" value="HldE"/>
    <property type="match status" value="1"/>
</dbReference>
<dbReference type="InterPro" id="IPR023030">
    <property type="entry name" value="Bifunc_HldE"/>
</dbReference>
<dbReference type="InterPro" id="IPR002173">
    <property type="entry name" value="Carboh/pur_kinase_PfkB_CS"/>
</dbReference>
<dbReference type="InterPro" id="IPR004821">
    <property type="entry name" value="Cyt_trans-like"/>
</dbReference>
<dbReference type="InterPro" id="IPR011611">
    <property type="entry name" value="PfkB_dom"/>
</dbReference>
<dbReference type="InterPro" id="IPR011913">
    <property type="entry name" value="RfaE_dom_I"/>
</dbReference>
<dbReference type="InterPro" id="IPR011914">
    <property type="entry name" value="RfaE_dom_II"/>
</dbReference>
<dbReference type="InterPro" id="IPR029056">
    <property type="entry name" value="Ribokinase-like"/>
</dbReference>
<dbReference type="InterPro" id="IPR014729">
    <property type="entry name" value="Rossmann-like_a/b/a_fold"/>
</dbReference>
<dbReference type="NCBIfam" id="TIGR00125">
    <property type="entry name" value="cyt_tran_rel"/>
    <property type="match status" value="1"/>
</dbReference>
<dbReference type="NCBIfam" id="NF008454">
    <property type="entry name" value="PRK11316.1"/>
    <property type="match status" value="1"/>
</dbReference>
<dbReference type="NCBIfam" id="TIGR02198">
    <property type="entry name" value="rfaE_dom_I"/>
    <property type="match status" value="1"/>
</dbReference>
<dbReference type="NCBIfam" id="TIGR02199">
    <property type="entry name" value="rfaE_dom_II"/>
    <property type="match status" value="1"/>
</dbReference>
<dbReference type="PANTHER" id="PTHR46969">
    <property type="entry name" value="BIFUNCTIONAL PROTEIN HLDE"/>
    <property type="match status" value="1"/>
</dbReference>
<dbReference type="PANTHER" id="PTHR46969:SF1">
    <property type="entry name" value="BIFUNCTIONAL PROTEIN HLDE"/>
    <property type="match status" value="1"/>
</dbReference>
<dbReference type="Pfam" id="PF01467">
    <property type="entry name" value="CTP_transf_like"/>
    <property type="match status" value="1"/>
</dbReference>
<dbReference type="Pfam" id="PF00294">
    <property type="entry name" value="PfkB"/>
    <property type="match status" value="1"/>
</dbReference>
<dbReference type="SUPFAM" id="SSF52374">
    <property type="entry name" value="Nucleotidylyl transferase"/>
    <property type="match status" value="1"/>
</dbReference>
<dbReference type="SUPFAM" id="SSF53613">
    <property type="entry name" value="Ribokinase-like"/>
    <property type="match status" value="1"/>
</dbReference>
<dbReference type="PROSITE" id="PS00583">
    <property type="entry name" value="PFKB_KINASES_1"/>
    <property type="match status" value="1"/>
</dbReference>
<protein>
    <recommendedName>
        <fullName evidence="1">Bifunctional protein HldE</fullName>
    </recommendedName>
    <domain>
        <recommendedName>
            <fullName evidence="1">D-beta-D-heptose 7-phosphate kinase</fullName>
            <ecNumber evidence="1">2.7.1.167</ecNumber>
        </recommendedName>
        <alternativeName>
            <fullName evidence="1">D-beta-D-heptose 7-phosphotransferase</fullName>
        </alternativeName>
        <alternativeName>
            <fullName evidence="1">D-glycero-beta-D-manno-heptose-7-phosphate kinase</fullName>
        </alternativeName>
    </domain>
    <domain>
        <recommendedName>
            <fullName evidence="1">D-beta-D-heptose 1-phosphate adenylyltransferase</fullName>
            <ecNumber evidence="1">2.7.7.70</ecNumber>
        </recommendedName>
        <alternativeName>
            <fullName evidence="1">D-glycero-beta-D-manno-heptose 1-phosphate adenylyltransferase</fullName>
        </alternativeName>
    </domain>
</protein>
<organism>
    <name type="scientific">Hydrogenovibrio crunogenus (strain DSM 25203 / XCL-2)</name>
    <name type="common">Thiomicrospira crunogena</name>
    <dbReference type="NCBI Taxonomy" id="317025"/>
    <lineage>
        <taxon>Bacteria</taxon>
        <taxon>Pseudomonadati</taxon>
        <taxon>Pseudomonadota</taxon>
        <taxon>Gammaproteobacteria</taxon>
        <taxon>Thiotrichales</taxon>
        <taxon>Piscirickettsiaceae</taxon>
        <taxon>Hydrogenovibrio</taxon>
    </lineage>
</organism>
<name>HLDE_HYDCU</name>
<sequence length="480" mass="51828">MNMHDFSKTKILVVGDVMLDQYWSGRAGRISPEAPVPVVKVADENVRAGGAANVALNIADLGADVNLMGVIGQDSFGQQLNQVLEQAGVASNWVYSESGTICKLRVLSHHQQLIRMDFENAVPELSAKSLAKLVAEKVADYDVLVISDYAKGALQFVEEMIQAAKSQQVPVLIDPKGNDFSRYAGATLVKPNQGEFELIVGVCADQDDLIEKAKQLIQEINIDALLVTRSEHGMALIEKDAGATILKSRAQEVFDVTGAGDTVIATLATAFGSGLSMPKSVKLANEAASIVVRKVGTSTVSKVELEEQLNASMRHQGYASMSEDEVHSLVQIAQSKGEKVVFTNGCFDLLHSGHVRYLNEAARQGDRLVVAVNSDESVKLLKGDSRPIVELAGRMELLSALSCVDWVVPFNEETPERLICKLAPDVLVKGGDYKPDEIAGAQCVWDKGGEVAVLSFWEGYSTTRMVDKIQEAEIKEGAAQ</sequence>